<reference key="1">
    <citation type="journal article" date="2003" name="Appl. Microbiol. Biotechnol.">
        <title>The Corynebacterium glutamicum genome: features and impacts on biotechnological processes.</title>
        <authorList>
            <person name="Ikeda M."/>
            <person name="Nakagawa S."/>
        </authorList>
    </citation>
    <scope>NUCLEOTIDE SEQUENCE [LARGE SCALE GENOMIC DNA]</scope>
    <source>
        <strain>ATCC 13032 / DSM 20300 / JCM 1318 / BCRC 11384 / CCUG 27702 / LMG 3730 / NBRC 12168 / NCIMB 10025 / NRRL B-2784 / 534</strain>
    </source>
</reference>
<reference key="2">
    <citation type="journal article" date="2003" name="J. Biotechnol.">
        <title>The complete Corynebacterium glutamicum ATCC 13032 genome sequence and its impact on the production of L-aspartate-derived amino acids and vitamins.</title>
        <authorList>
            <person name="Kalinowski J."/>
            <person name="Bathe B."/>
            <person name="Bartels D."/>
            <person name="Bischoff N."/>
            <person name="Bott M."/>
            <person name="Burkovski A."/>
            <person name="Dusch N."/>
            <person name="Eggeling L."/>
            <person name="Eikmanns B.J."/>
            <person name="Gaigalat L."/>
            <person name="Goesmann A."/>
            <person name="Hartmann M."/>
            <person name="Huthmacher K."/>
            <person name="Kraemer R."/>
            <person name="Linke B."/>
            <person name="McHardy A.C."/>
            <person name="Meyer F."/>
            <person name="Moeckel B."/>
            <person name="Pfefferle W."/>
            <person name="Puehler A."/>
            <person name="Rey D.A."/>
            <person name="Rueckert C."/>
            <person name="Rupp O."/>
            <person name="Sahm H."/>
            <person name="Wendisch V.F."/>
            <person name="Wiegraebe I."/>
            <person name="Tauch A."/>
        </authorList>
    </citation>
    <scope>NUCLEOTIDE SEQUENCE [LARGE SCALE GENOMIC DNA]</scope>
    <source>
        <strain>ATCC 13032 / DSM 20300 / JCM 1318 / BCRC 11384 / CCUG 27702 / LMG 3730 / NBRC 12168 / NCIMB 10025 / NRRL B-2784 / 534</strain>
    </source>
</reference>
<comment type="catalytic activity">
    <reaction evidence="1">
        <text>tRNA(Phe) + L-phenylalanine + ATP = L-phenylalanyl-tRNA(Phe) + AMP + diphosphate + H(+)</text>
        <dbReference type="Rhea" id="RHEA:19413"/>
        <dbReference type="Rhea" id="RHEA-COMP:9668"/>
        <dbReference type="Rhea" id="RHEA-COMP:9699"/>
        <dbReference type="ChEBI" id="CHEBI:15378"/>
        <dbReference type="ChEBI" id="CHEBI:30616"/>
        <dbReference type="ChEBI" id="CHEBI:33019"/>
        <dbReference type="ChEBI" id="CHEBI:58095"/>
        <dbReference type="ChEBI" id="CHEBI:78442"/>
        <dbReference type="ChEBI" id="CHEBI:78531"/>
        <dbReference type="ChEBI" id="CHEBI:456215"/>
        <dbReference type="EC" id="6.1.1.20"/>
    </reaction>
</comment>
<comment type="cofactor">
    <cofactor evidence="1">
        <name>Mg(2+)</name>
        <dbReference type="ChEBI" id="CHEBI:18420"/>
    </cofactor>
    <text evidence="1">Binds 2 magnesium ions per tetramer.</text>
</comment>
<comment type="subunit">
    <text evidence="1">Tetramer of two alpha and two beta subunits.</text>
</comment>
<comment type="subcellular location">
    <subcellularLocation>
        <location evidence="1">Cytoplasm</location>
    </subcellularLocation>
</comment>
<comment type="similarity">
    <text evidence="1">Belongs to the class-II aminoacyl-tRNA synthetase family. Phe-tRNA synthetase alpha subunit type 1 subfamily.</text>
</comment>
<comment type="sequence caution" evidence="2">
    <conflict type="erroneous initiation">
        <sequence resource="EMBL-CDS" id="CAF21400"/>
    </conflict>
</comment>
<gene>
    <name evidence="1" type="primary">pheS</name>
    <name type="ordered locus">Cgl1389</name>
    <name type="ordered locus">cg1574</name>
</gene>
<sequence>MTEASLNEAADAAIKAFDGAQNLDELAALRRDHLGDAAPIPQARRSLGTIPKDQRKDAGRFVNMALGRAEKHFAQVKVVLEEKRNAEVLELERVDVTVPTTREQVGALHPITILNEQIADIFVGMGWEIAEGPEVEAEYFNFDALNFLPDHPARTLQDTFHIAPEGSRQVLRTHTSPVQVRTMLNREVPIYIACPGRVFRTDELDATHTPVFHQIEGLAVDKGLTMAHLRGTLDHLAKELFGPETKTRMRSNYFPFTEPSAEVDVWFPNKKGGAGWIEWGGCGMVNPNVLRAVGVDPEEYTGFAFGMGIERTLQFRNGLSDMRDMVEGDIRFTLPFGIQA</sequence>
<name>SYFA_CORGL</name>
<organism>
    <name type="scientific">Corynebacterium glutamicum (strain ATCC 13032 / DSM 20300 / JCM 1318 / BCRC 11384 / CCUG 27702 / LMG 3730 / NBRC 12168 / NCIMB 10025 / NRRL B-2784 / 534)</name>
    <dbReference type="NCBI Taxonomy" id="196627"/>
    <lineage>
        <taxon>Bacteria</taxon>
        <taxon>Bacillati</taxon>
        <taxon>Actinomycetota</taxon>
        <taxon>Actinomycetes</taxon>
        <taxon>Mycobacteriales</taxon>
        <taxon>Corynebacteriaceae</taxon>
        <taxon>Corynebacterium</taxon>
    </lineage>
</organism>
<dbReference type="EC" id="6.1.1.20" evidence="1"/>
<dbReference type="EMBL" id="BA000036">
    <property type="protein sequence ID" value="BAB98782.1"/>
    <property type="molecule type" value="Genomic_DNA"/>
</dbReference>
<dbReference type="EMBL" id="BX927152">
    <property type="protein sequence ID" value="CAF21400.1"/>
    <property type="status" value="ALT_INIT"/>
    <property type="molecule type" value="Genomic_DNA"/>
</dbReference>
<dbReference type="RefSeq" id="NP_600608.1">
    <property type="nucleotide sequence ID" value="NC_003450.3"/>
</dbReference>
<dbReference type="SMR" id="Q8NQN7"/>
<dbReference type="STRING" id="196627.cg1574"/>
<dbReference type="KEGG" id="cgb:cg1574"/>
<dbReference type="KEGG" id="cgl:Cgl1389"/>
<dbReference type="PATRIC" id="fig|196627.13.peg.1357"/>
<dbReference type="eggNOG" id="COG0016">
    <property type="taxonomic scope" value="Bacteria"/>
</dbReference>
<dbReference type="HOGENOM" id="CLU_025086_0_1_11"/>
<dbReference type="OrthoDB" id="9800719at2"/>
<dbReference type="BioCyc" id="CORYNE:G18NG-10968-MONOMER"/>
<dbReference type="Proteomes" id="UP000000582">
    <property type="component" value="Chromosome"/>
</dbReference>
<dbReference type="Proteomes" id="UP000001009">
    <property type="component" value="Chromosome"/>
</dbReference>
<dbReference type="GO" id="GO:0005737">
    <property type="term" value="C:cytoplasm"/>
    <property type="evidence" value="ECO:0007669"/>
    <property type="project" value="UniProtKB-SubCell"/>
</dbReference>
<dbReference type="GO" id="GO:0005524">
    <property type="term" value="F:ATP binding"/>
    <property type="evidence" value="ECO:0007669"/>
    <property type="project" value="UniProtKB-UniRule"/>
</dbReference>
<dbReference type="GO" id="GO:0000287">
    <property type="term" value="F:magnesium ion binding"/>
    <property type="evidence" value="ECO:0007669"/>
    <property type="project" value="UniProtKB-UniRule"/>
</dbReference>
<dbReference type="GO" id="GO:0004826">
    <property type="term" value="F:phenylalanine-tRNA ligase activity"/>
    <property type="evidence" value="ECO:0007669"/>
    <property type="project" value="UniProtKB-UniRule"/>
</dbReference>
<dbReference type="GO" id="GO:0000049">
    <property type="term" value="F:tRNA binding"/>
    <property type="evidence" value="ECO:0007669"/>
    <property type="project" value="InterPro"/>
</dbReference>
<dbReference type="GO" id="GO:0006432">
    <property type="term" value="P:phenylalanyl-tRNA aminoacylation"/>
    <property type="evidence" value="ECO:0007669"/>
    <property type="project" value="UniProtKB-UniRule"/>
</dbReference>
<dbReference type="CDD" id="cd00496">
    <property type="entry name" value="PheRS_alpha_core"/>
    <property type="match status" value="1"/>
</dbReference>
<dbReference type="Gene3D" id="3.30.930.10">
    <property type="entry name" value="Bira Bifunctional Protein, Domain 2"/>
    <property type="match status" value="1"/>
</dbReference>
<dbReference type="HAMAP" id="MF_00281">
    <property type="entry name" value="Phe_tRNA_synth_alpha1"/>
    <property type="match status" value="1"/>
</dbReference>
<dbReference type="InterPro" id="IPR006195">
    <property type="entry name" value="aa-tRNA-synth_II"/>
</dbReference>
<dbReference type="InterPro" id="IPR045864">
    <property type="entry name" value="aa-tRNA-synth_II/BPL/LPL"/>
</dbReference>
<dbReference type="InterPro" id="IPR004529">
    <property type="entry name" value="Phe-tRNA-synth_IIc_asu"/>
</dbReference>
<dbReference type="InterPro" id="IPR004188">
    <property type="entry name" value="Phe-tRNA_ligase_II_N"/>
</dbReference>
<dbReference type="InterPro" id="IPR022911">
    <property type="entry name" value="Phe_tRNA_ligase_alpha1_bac"/>
</dbReference>
<dbReference type="InterPro" id="IPR002319">
    <property type="entry name" value="Phenylalanyl-tRNA_Synthase"/>
</dbReference>
<dbReference type="InterPro" id="IPR010978">
    <property type="entry name" value="tRNA-bd_arm"/>
</dbReference>
<dbReference type="NCBIfam" id="TIGR00468">
    <property type="entry name" value="pheS"/>
    <property type="match status" value="1"/>
</dbReference>
<dbReference type="PANTHER" id="PTHR11538:SF41">
    <property type="entry name" value="PHENYLALANINE--TRNA LIGASE, MITOCHONDRIAL"/>
    <property type="match status" value="1"/>
</dbReference>
<dbReference type="PANTHER" id="PTHR11538">
    <property type="entry name" value="PHENYLALANYL-TRNA SYNTHETASE"/>
    <property type="match status" value="1"/>
</dbReference>
<dbReference type="Pfam" id="PF02912">
    <property type="entry name" value="Phe_tRNA-synt_N"/>
    <property type="match status" value="1"/>
</dbReference>
<dbReference type="Pfam" id="PF01409">
    <property type="entry name" value="tRNA-synt_2d"/>
    <property type="match status" value="1"/>
</dbReference>
<dbReference type="SUPFAM" id="SSF55681">
    <property type="entry name" value="Class II aaRS and biotin synthetases"/>
    <property type="match status" value="1"/>
</dbReference>
<dbReference type="SUPFAM" id="SSF46589">
    <property type="entry name" value="tRNA-binding arm"/>
    <property type="match status" value="1"/>
</dbReference>
<dbReference type="PROSITE" id="PS50862">
    <property type="entry name" value="AA_TRNA_LIGASE_II"/>
    <property type="match status" value="1"/>
</dbReference>
<evidence type="ECO:0000255" key="1">
    <source>
        <dbReference type="HAMAP-Rule" id="MF_00281"/>
    </source>
</evidence>
<evidence type="ECO:0000305" key="2"/>
<keyword id="KW-0030">Aminoacyl-tRNA synthetase</keyword>
<keyword id="KW-0067">ATP-binding</keyword>
<keyword id="KW-0963">Cytoplasm</keyword>
<keyword id="KW-0436">Ligase</keyword>
<keyword id="KW-0460">Magnesium</keyword>
<keyword id="KW-0479">Metal-binding</keyword>
<keyword id="KW-0547">Nucleotide-binding</keyword>
<keyword id="KW-0648">Protein biosynthesis</keyword>
<keyword id="KW-1185">Reference proteome</keyword>
<protein>
    <recommendedName>
        <fullName evidence="1">Phenylalanine--tRNA ligase alpha subunit</fullName>
        <ecNumber evidence="1">6.1.1.20</ecNumber>
    </recommendedName>
    <alternativeName>
        <fullName evidence="1">Phenylalanyl-tRNA synthetase alpha subunit</fullName>
        <shortName evidence="1">PheRS</shortName>
    </alternativeName>
</protein>
<proteinExistence type="inferred from homology"/>
<feature type="chain" id="PRO_0000126696" description="Phenylalanine--tRNA ligase alpha subunit">
    <location>
        <begin position="1"/>
        <end position="340"/>
    </location>
</feature>
<feature type="binding site" evidence="1">
    <location>
        <position position="258"/>
    </location>
    <ligand>
        <name>Mg(2+)</name>
        <dbReference type="ChEBI" id="CHEBI:18420"/>
        <note>shared with beta subunit</note>
    </ligand>
</feature>
<accession>Q8NQN7</accession>